<organism>
    <name type="scientific">Picosynechococcus sp. (strain ATCC 27264 / PCC 7002 / PR-6)</name>
    <name type="common">Agmenellum quadruplicatum</name>
    <dbReference type="NCBI Taxonomy" id="32049"/>
    <lineage>
        <taxon>Bacteria</taxon>
        <taxon>Bacillati</taxon>
        <taxon>Cyanobacteriota</taxon>
        <taxon>Cyanophyceae</taxon>
        <taxon>Oscillatoriophycideae</taxon>
        <taxon>Chroococcales</taxon>
        <taxon>Geminocystaceae</taxon>
        <taxon>Picosynechococcus</taxon>
    </lineage>
</organism>
<protein>
    <recommendedName>
        <fullName evidence="1">Large ribosomal subunit protein bL34</fullName>
    </recommendedName>
    <alternativeName>
        <fullName evidence="3">50S ribosomal protein L34</fullName>
    </alternativeName>
</protein>
<dbReference type="EMBL" id="CP000951">
    <property type="protein sequence ID" value="ACA98991.1"/>
    <property type="molecule type" value="Genomic_DNA"/>
</dbReference>
<dbReference type="RefSeq" id="WP_012306615.1">
    <property type="nucleotide sequence ID" value="NZ_JAHHPU010000001.1"/>
</dbReference>
<dbReference type="SMR" id="B1XJD1"/>
<dbReference type="STRING" id="32049.SYNPCC7002_A0988"/>
<dbReference type="KEGG" id="syp:SYNPCC7002_A0988"/>
<dbReference type="eggNOG" id="COG0230">
    <property type="taxonomic scope" value="Bacteria"/>
</dbReference>
<dbReference type="HOGENOM" id="CLU_129938_2_1_3"/>
<dbReference type="Proteomes" id="UP000001688">
    <property type="component" value="Chromosome"/>
</dbReference>
<dbReference type="GO" id="GO:1990904">
    <property type="term" value="C:ribonucleoprotein complex"/>
    <property type="evidence" value="ECO:0007669"/>
    <property type="project" value="UniProtKB-KW"/>
</dbReference>
<dbReference type="GO" id="GO:0005840">
    <property type="term" value="C:ribosome"/>
    <property type="evidence" value="ECO:0007669"/>
    <property type="project" value="UniProtKB-KW"/>
</dbReference>
<dbReference type="GO" id="GO:0003735">
    <property type="term" value="F:structural constituent of ribosome"/>
    <property type="evidence" value="ECO:0007669"/>
    <property type="project" value="InterPro"/>
</dbReference>
<dbReference type="GO" id="GO:0006412">
    <property type="term" value="P:translation"/>
    <property type="evidence" value="ECO:0007669"/>
    <property type="project" value="UniProtKB-UniRule"/>
</dbReference>
<dbReference type="Gene3D" id="1.10.287.3980">
    <property type="match status" value="1"/>
</dbReference>
<dbReference type="HAMAP" id="MF_00391">
    <property type="entry name" value="Ribosomal_bL34"/>
    <property type="match status" value="1"/>
</dbReference>
<dbReference type="InterPro" id="IPR000271">
    <property type="entry name" value="Ribosomal_bL34"/>
</dbReference>
<dbReference type="NCBIfam" id="TIGR01030">
    <property type="entry name" value="rpmH_bact"/>
    <property type="match status" value="1"/>
</dbReference>
<dbReference type="Pfam" id="PF00468">
    <property type="entry name" value="Ribosomal_L34"/>
    <property type="match status" value="1"/>
</dbReference>
<accession>B1XJD1</accession>
<gene>
    <name evidence="1" type="primary">rpmH</name>
    <name evidence="1" type="synonym">rpl34</name>
    <name type="ordered locus">SYNPCC7002_A0988</name>
</gene>
<name>RL34_PICP2</name>
<feature type="chain" id="PRO_1000196129" description="Large ribosomal subunit protein bL34">
    <location>
        <begin position="1"/>
        <end position="45"/>
    </location>
</feature>
<feature type="region of interest" description="Disordered" evidence="2">
    <location>
        <begin position="1"/>
        <end position="45"/>
    </location>
</feature>
<feature type="compositionally biased region" description="Basic residues" evidence="2">
    <location>
        <begin position="11"/>
        <end position="25"/>
    </location>
</feature>
<feature type="compositionally biased region" description="Basic residues" evidence="2">
    <location>
        <begin position="33"/>
        <end position="45"/>
    </location>
</feature>
<keyword id="KW-1185">Reference proteome</keyword>
<keyword id="KW-0687">Ribonucleoprotein</keyword>
<keyword id="KW-0689">Ribosomal protein</keyword>
<reference key="1">
    <citation type="submission" date="2008-02" db="EMBL/GenBank/DDBJ databases">
        <title>Complete sequence of Synechococcus sp. PCC 7002.</title>
        <authorList>
            <person name="Li T."/>
            <person name="Zhao J."/>
            <person name="Zhao C."/>
            <person name="Liu Z."/>
            <person name="Zhao F."/>
            <person name="Marquardt J."/>
            <person name="Nomura C.T."/>
            <person name="Persson S."/>
            <person name="Detter J.C."/>
            <person name="Richardson P.M."/>
            <person name="Lanz C."/>
            <person name="Schuster S.C."/>
            <person name="Wang J."/>
            <person name="Li S."/>
            <person name="Huang X."/>
            <person name="Cai T."/>
            <person name="Yu Z."/>
            <person name="Luo J."/>
            <person name="Zhao J."/>
            <person name="Bryant D.A."/>
        </authorList>
    </citation>
    <scope>NUCLEOTIDE SEQUENCE [LARGE SCALE GENOMIC DNA]</scope>
    <source>
        <strain>ATCC 27264 / PCC 7002 / PR-6</strain>
    </source>
</reference>
<comment type="similarity">
    <text evidence="1">Belongs to the bacterial ribosomal protein bL34 family.</text>
</comment>
<sequence>MTKRTLGGTVRKQKRTSGFRARMRSHTGQNVIRARRKKGRHRLTV</sequence>
<proteinExistence type="inferred from homology"/>
<evidence type="ECO:0000255" key="1">
    <source>
        <dbReference type="HAMAP-Rule" id="MF_00391"/>
    </source>
</evidence>
<evidence type="ECO:0000256" key="2">
    <source>
        <dbReference type="SAM" id="MobiDB-lite"/>
    </source>
</evidence>
<evidence type="ECO:0000305" key="3"/>